<comment type="function">
    <text evidence="2">Involved in the inactivation of MAP kinases. Dephosphorylates ERK, JNK and p38 MAP-kinases. Plays a negative role in TCR signaling by dephosphorylating MAP3K7 adapter TAB1 leading to its inactivation.</text>
</comment>
<comment type="catalytic activity">
    <reaction evidence="4">
        <text>O-phospho-L-tyrosyl-[protein] + H2O = L-tyrosyl-[protein] + phosphate</text>
        <dbReference type="Rhea" id="RHEA:10684"/>
        <dbReference type="Rhea" id="RHEA-COMP:10136"/>
        <dbReference type="Rhea" id="RHEA-COMP:20101"/>
        <dbReference type="ChEBI" id="CHEBI:15377"/>
        <dbReference type="ChEBI" id="CHEBI:43474"/>
        <dbReference type="ChEBI" id="CHEBI:46858"/>
        <dbReference type="ChEBI" id="CHEBI:61978"/>
        <dbReference type="EC" id="3.1.3.48"/>
    </reaction>
</comment>
<comment type="catalytic activity">
    <reaction>
        <text>O-phospho-L-seryl-[protein] + H2O = L-seryl-[protein] + phosphate</text>
        <dbReference type="Rhea" id="RHEA:20629"/>
        <dbReference type="Rhea" id="RHEA-COMP:9863"/>
        <dbReference type="Rhea" id="RHEA-COMP:11604"/>
        <dbReference type="ChEBI" id="CHEBI:15377"/>
        <dbReference type="ChEBI" id="CHEBI:29999"/>
        <dbReference type="ChEBI" id="CHEBI:43474"/>
        <dbReference type="ChEBI" id="CHEBI:83421"/>
        <dbReference type="EC" id="3.1.3.16"/>
    </reaction>
</comment>
<comment type="catalytic activity">
    <reaction>
        <text>O-phospho-L-threonyl-[protein] + H2O = L-threonyl-[protein] + phosphate</text>
        <dbReference type="Rhea" id="RHEA:47004"/>
        <dbReference type="Rhea" id="RHEA-COMP:11060"/>
        <dbReference type="Rhea" id="RHEA-COMP:11605"/>
        <dbReference type="ChEBI" id="CHEBI:15377"/>
        <dbReference type="ChEBI" id="CHEBI:30013"/>
        <dbReference type="ChEBI" id="CHEBI:43474"/>
        <dbReference type="ChEBI" id="CHEBI:61977"/>
        <dbReference type="EC" id="3.1.3.16"/>
    </reaction>
</comment>
<comment type="subunit">
    <text evidence="1">Interacts with CD28.</text>
</comment>
<comment type="similarity">
    <text evidence="5">Belongs to the protein-tyrosine phosphatase family. Non-receptor class dual specificity subfamily.</text>
</comment>
<name>DUS14_BOVIN</name>
<protein>
    <recommendedName>
        <fullName>Dual specificity protein phosphatase 14</fullName>
        <ecNumber>3.1.3.16</ecNumber>
        <ecNumber>3.1.3.48</ecNumber>
    </recommendedName>
</protein>
<evidence type="ECO:0000250" key="1"/>
<evidence type="ECO:0000250" key="2">
    <source>
        <dbReference type="UniProtKB" id="O95147"/>
    </source>
</evidence>
<evidence type="ECO:0000255" key="3">
    <source>
        <dbReference type="PROSITE-ProRule" id="PRU00160"/>
    </source>
</evidence>
<evidence type="ECO:0000255" key="4">
    <source>
        <dbReference type="PROSITE-ProRule" id="PRU10044"/>
    </source>
</evidence>
<evidence type="ECO:0000305" key="5"/>
<gene>
    <name type="primary">DUSP14</name>
</gene>
<proteinExistence type="evidence at transcript level"/>
<dbReference type="EC" id="3.1.3.16"/>
<dbReference type="EC" id="3.1.3.48"/>
<dbReference type="EMBL" id="BC118267">
    <property type="protein sequence ID" value="AAI18268.1"/>
    <property type="molecule type" value="mRNA"/>
</dbReference>
<dbReference type="RefSeq" id="NP_001068776.1">
    <property type="nucleotide sequence ID" value="NM_001075308.1"/>
</dbReference>
<dbReference type="RefSeq" id="XP_005220051.1">
    <property type="nucleotide sequence ID" value="XM_005219994.5"/>
</dbReference>
<dbReference type="RefSeq" id="XP_010814059.1">
    <property type="nucleotide sequence ID" value="XM_010815757.4"/>
</dbReference>
<dbReference type="SMR" id="Q17QM8"/>
<dbReference type="FunCoup" id="Q17QM8">
    <property type="interactions" value="155"/>
</dbReference>
<dbReference type="STRING" id="9913.ENSBTAP00000013570"/>
<dbReference type="PaxDb" id="9913-ENSBTAP00000013570"/>
<dbReference type="Ensembl" id="ENSBTAT00000013570.4">
    <property type="protein sequence ID" value="ENSBTAP00000013570.2"/>
    <property type="gene ID" value="ENSBTAG00000010279.4"/>
</dbReference>
<dbReference type="Ensembl" id="ENSBTAT00000106418.1">
    <property type="protein sequence ID" value="ENSBTAP00000076102.1"/>
    <property type="gene ID" value="ENSBTAG00000010279.4"/>
</dbReference>
<dbReference type="Ensembl" id="ENSBTAT00000110356.1">
    <property type="protein sequence ID" value="ENSBTAP00000084775.1"/>
    <property type="gene ID" value="ENSBTAG00000010279.4"/>
</dbReference>
<dbReference type="Ensembl" id="ENSBTAT00000110572.1">
    <property type="protein sequence ID" value="ENSBTAP00000084594.1"/>
    <property type="gene ID" value="ENSBTAG00000010279.4"/>
</dbReference>
<dbReference type="Ensembl" id="ENSBTAT00000113210.1">
    <property type="protein sequence ID" value="ENSBTAP00000080877.1"/>
    <property type="gene ID" value="ENSBTAG00000010279.4"/>
</dbReference>
<dbReference type="Ensembl" id="ENSBTAT00000115597.1">
    <property type="protein sequence ID" value="ENSBTAP00000091506.1"/>
    <property type="gene ID" value="ENSBTAG00000010279.4"/>
</dbReference>
<dbReference type="Ensembl" id="ENSBTAT00000120384.1">
    <property type="protein sequence ID" value="ENSBTAP00000101136.1"/>
    <property type="gene ID" value="ENSBTAG00000010279.4"/>
</dbReference>
<dbReference type="Ensembl" id="ENSBTAT00000126251.1">
    <property type="protein sequence ID" value="ENSBTAP00000082563.1"/>
    <property type="gene ID" value="ENSBTAG00000010279.4"/>
</dbReference>
<dbReference type="Ensembl" id="ENSBTAT00000132703.1">
    <property type="protein sequence ID" value="ENSBTAP00000085045.1"/>
    <property type="gene ID" value="ENSBTAG00000010279.4"/>
</dbReference>
<dbReference type="GeneID" id="507294"/>
<dbReference type="KEGG" id="bta:507294"/>
<dbReference type="CTD" id="11072"/>
<dbReference type="VEuPathDB" id="HostDB:ENSBTAG00000010279"/>
<dbReference type="VGNC" id="VGNC:28252">
    <property type="gene designation" value="DUSP14"/>
</dbReference>
<dbReference type="eggNOG" id="KOG1718">
    <property type="taxonomic scope" value="Eukaryota"/>
</dbReference>
<dbReference type="GeneTree" id="ENSGT00940000160675"/>
<dbReference type="HOGENOM" id="CLU_027074_3_2_1"/>
<dbReference type="InParanoid" id="Q17QM8"/>
<dbReference type="OMA" id="VYICGAH"/>
<dbReference type="OrthoDB" id="285418at2759"/>
<dbReference type="TreeFam" id="TF316009"/>
<dbReference type="Proteomes" id="UP000009136">
    <property type="component" value="Chromosome 19"/>
</dbReference>
<dbReference type="Bgee" id="ENSBTAG00000010279">
    <property type="expression patterns" value="Expressed in surface of tongue and 103 other cell types or tissues"/>
</dbReference>
<dbReference type="GO" id="GO:0017017">
    <property type="term" value="F:MAP kinase tyrosine/serine/threonine phosphatase activity"/>
    <property type="evidence" value="ECO:0007669"/>
    <property type="project" value="InterPro"/>
</dbReference>
<dbReference type="GO" id="GO:0004722">
    <property type="term" value="F:protein serine/threonine phosphatase activity"/>
    <property type="evidence" value="ECO:0007669"/>
    <property type="project" value="UniProtKB-EC"/>
</dbReference>
<dbReference type="GO" id="GO:0004725">
    <property type="term" value="F:protein tyrosine phosphatase activity"/>
    <property type="evidence" value="ECO:0007669"/>
    <property type="project" value="UniProtKB-EC"/>
</dbReference>
<dbReference type="CDD" id="cd14572">
    <property type="entry name" value="DUSP14"/>
    <property type="match status" value="1"/>
</dbReference>
<dbReference type="FunFam" id="3.90.190.10:FF:000049">
    <property type="entry name" value="Dual specificity protein phosphatase 14"/>
    <property type="match status" value="1"/>
</dbReference>
<dbReference type="Gene3D" id="3.90.190.10">
    <property type="entry name" value="Protein tyrosine phosphatase superfamily"/>
    <property type="match status" value="1"/>
</dbReference>
<dbReference type="InterPro" id="IPR020420">
    <property type="entry name" value="Atypical_DUSP_subfamB"/>
</dbReference>
<dbReference type="InterPro" id="IPR000340">
    <property type="entry name" value="Dual-sp_phosphatase_cat-dom"/>
</dbReference>
<dbReference type="InterPro" id="IPR052103">
    <property type="entry name" value="Dual_spec_Phospatases"/>
</dbReference>
<dbReference type="InterPro" id="IPR029021">
    <property type="entry name" value="Prot-tyrosine_phosphatase-like"/>
</dbReference>
<dbReference type="InterPro" id="IPR016130">
    <property type="entry name" value="Tyr_Pase_AS"/>
</dbReference>
<dbReference type="InterPro" id="IPR000387">
    <property type="entry name" value="Tyr_Pase_dom"/>
</dbReference>
<dbReference type="InterPro" id="IPR020422">
    <property type="entry name" value="TYR_PHOSPHATASE_DUAL_dom"/>
</dbReference>
<dbReference type="PANTHER" id="PTHR45961:SF5">
    <property type="entry name" value="DUAL SPECIFICITY PROTEIN PHOSPHATASE 14"/>
    <property type="match status" value="1"/>
</dbReference>
<dbReference type="PANTHER" id="PTHR45961">
    <property type="entry name" value="IP21249P"/>
    <property type="match status" value="1"/>
</dbReference>
<dbReference type="Pfam" id="PF00782">
    <property type="entry name" value="DSPc"/>
    <property type="match status" value="1"/>
</dbReference>
<dbReference type="PRINTS" id="PR01908">
    <property type="entry name" value="ADSPHPHTASE"/>
</dbReference>
<dbReference type="PRINTS" id="PR01910">
    <property type="entry name" value="ADSPHPHTASEB"/>
</dbReference>
<dbReference type="SMART" id="SM00195">
    <property type="entry name" value="DSPc"/>
    <property type="match status" value="1"/>
</dbReference>
<dbReference type="SUPFAM" id="SSF52799">
    <property type="entry name" value="(Phosphotyrosine protein) phosphatases II"/>
    <property type="match status" value="1"/>
</dbReference>
<dbReference type="PROSITE" id="PS00383">
    <property type="entry name" value="TYR_PHOSPHATASE_1"/>
    <property type="match status" value="1"/>
</dbReference>
<dbReference type="PROSITE" id="PS50056">
    <property type="entry name" value="TYR_PHOSPHATASE_2"/>
    <property type="match status" value="1"/>
</dbReference>
<dbReference type="PROSITE" id="PS50054">
    <property type="entry name" value="TYR_PHOSPHATASE_DUAL"/>
    <property type="match status" value="1"/>
</dbReference>
<accession>Q17QM8</accession>
<reference key="1">
    <citation type="submission" date="2006-06" db="EMBL/GenBank/DDBJ databases">
        <authorList>
            <consortium name="NIH - Mammalian Gene Collection (MGC) project"/>
        </authorList>
    </citation>
    <scope>NUCLEOTIDE SEQUENCE [LARGE SCALE MRNA]</scope>
    <source>
        <strain>Hereford</strain>
        <tissue>Basal ganglia</tissue>
    </source>
</reference>
<feature type="chain" id="PRO_0000283054" description="Dual specificity protein phosphatase 14">
    <location>
        <begin position="1"/>
        <end position="198"/>
    </location>
</feature>
<feature type="domain" description="Tyrosine-protein phosphatase" evidence="3">
    <location>
        <begin position="26"/>
        <end position="167"/>
    </location>
</feature>
<feature type="active site" description="Phosphocysteine intermediate" evidence="3">
    <location>
        <position position="111"/>
    </location>
</feature>
<keyword id="KW-0378">Hydrolase</keyword>
<keyword id="KW-0904">Protein phosphatase</keyword>
<keyword id="KW-1185">Reference proteome</keyword>
<organism>
    <name type="scientific">Bos taurus</name>
    <name type="common">Bovine</name>
    <dbReference type="NCBI Taxonomy" id="9913"/>
    <lineage>
        <taxon>Eukaryota</taxon>
        <taxon>Metazoa</taxon>
        <taxon>Chordata</taxon>
        <taxon>Craniata</taxon>
        <taxon>Vertebrata</taxon>
        <taxon>Euteleostomi</taxon>
        <taxon>Mammalia</taxon>
        <taxon>Eutheria</taxon>
        <taxon>Laurasiatheria</taxon>
        <taxon>Artiodactyla</taxon>
        <taxon>Ruminantia</taxon>
        <taxon>Pecora</taxon>
        <taxon>Bovidae</taxon>
        <taxon>Bovinae</taxon>
        <taxon>Bos</taxon>
    </lineage>
</organism>
<sequence length="198" mass="22237">MSSRGHSTLPRTLMAPRMISEGDLGGIAQITSSLFLGRGSVASNRHLLQARGITCIVNATIEIPNFNWPQFEYVKVPLADMPHAPIGLYFDTVADKIHSVSRKHGATLVHCAAGVSRSATLCIAYLMKFHNVCLLEAYNWVKARRPVIRPNVGFWRQLIDYERQLFGKSTVKMVQTPYGIVPDVYEKESRHLLPYWGI</sequence>